<evidence type="ECO:0000250" key="1">
    <source>
        <dbReference type="UniProtKB" id="Q336T5"/>
    </source>
</evidence>
<evidence type="ECO:0000255" key="2"/>
<evidence type="ECO:0000255" key="3">
    <source>
        <dbReference type="PROSITE-ProRule" id="PRU00078"/>
    </source>
</evidence>
<evidence type="ECO:0000255" key="4">
    <source>
        <dbReference type="PROSITE-ProRule" id="PRU00079"/>
    </source>
</evidence>
<evidence type="ECO:0000255" key="5">
    <source>
        <dbReference type="PROSITE-ProRule" id="PRU00498"/>
    </source>
</evidence>
<evidence type="ECO:0000303" key="6">
    <source>
    </source>
</evidence>
<evidence type="ECO:0000305" key="7"/>
<evidence type="ECO:0000305" key="8">
    <source>
    </source>
</evidence>
<evidence type="ECO:0000312" key="9">
    <source>
        <dbReference type="Araport" id="AT1G65681"/>
    </source>
</evidence>
<feature type="signal peptide" evidence="2">
    <location>
        <begin position="1"/>
        <end status="unknown"/>
    </location>
</feature>
<feature type="chain" id="PRO_0000438380" description="Expansin-B6">
    <location>
        <begin status="unknown"/>
        <end position="223"/>
    </location>
</feature>
<feature type="domain" description="Expansin-like EG45" evidence="4">
    <location>
        <begin position="16"/>
        <end position="124"/>
    </location>
</feature>
<feature type="domain" description="Expansin-like CBD" evidence="3">
    <location>
        <begin position="137"/>
        <end position="218"/>
    </location>
</feature>
<feature type="glycosylation site" description="N-linked (GlcNAc...) asparagine" evidence="5">
    <location>
        <position position="213"/>
    </location>
</feature>
<feature type="disulfide bond" evidence="4">
    <location>
        <begin position="19"/>
        <end position="46"/>
    </location>
</feature>
<feature type="disulfide bond" evidence="4">
    <location>
        <begin position="49"/>
        <end position="119"/>
    </location>
</feature>
<feature type="disulfide bond" evidence="4">
    <location>
        <begin position="54"/>
        <end position="60"/>
    </location>
</feature>
<keyword id="KW-0134">Cell wall</keyword>
<keyword id="KW-1015">Disulfide bond</keyword>
<keyword id="KW-0325">Glycoprotein</keyword>
<keyword id="KW-0472">Membrane</keyword>
<keyword id="KW-1185">Reference proteome</keyword>
<keyword id="KW-0964">Secreted</keyword>
<keyword id="KW-0732">Signal</keyword>
<gene>
    <name evidence="6" type="primary">EXPB6</name>
    <name evidence="9" type="ordered locus">At1g65681</name>
</gene>
<reference key="1">
    <citation type="journal article" date="2000" name="Nature">
        <title>Sequence and analysis of chromosome 1 of the plant Arabidopsis thaliana.</title>
        <authorList>
            <person name="Theologis A."/>
            <person name="Ecker J.R."/>
            <person name="Palm C.J."/>
            <person name="Federspiel N.A."/>
            <person name="Kaul S."/>
            <person name="White O."/>
            <person name="Alonso J."/>
            <person name="Altafi H."/>
            <person name="Araujo R."/>
            <person name="Bowman C.L."/>
            <person name="Brooks S.Y."/>
            <person name="Buehler E."/>
            <person name="Chan A."/>
            <person name="Chao Q."/>
            <person name="Chen H."/>
            <person name="Cheuk R.F."/>
            <person name="Chin C.W."/>
            <person name="Chung M.K."/>
            <person name="Conn L."/>
            <person name="Conway A.B."/>
            <person name="Conway A.R."/>
            <person name="Creasy T.H."/>
            <person name="Dewar K."/>
            <person name="Dunn P."/>
            <person name="Etgu P."/>
            <person name="Feldblyum T.V."/>
            <person name="Feng J.-D."/>
            <person name="Fong B."/>
            <person name="Fujii C.Y."/>
            <person name="Gill J.E."/>
            <person name="Goldsmith A.D."/>
            <person name="Haas B."/>
            <person name="Hansen N.F."/>
            <person name="Hughes B."/>
            <person name="Huizar L."/>
            <person name="Hunter J.L."/>
            <person name="Jenkins J."/>
            <person name="Johnson-Hopson C."/>
            <person name="Khan S."/>
            <person name="Khaykin E."/>
            <person name="Kim C.J."/>
            <person name="Koo H.L."/>
            <person name="Kremenetskaia I."/>
            <person name="Kurtz D.B."/>
            <person name="Kwan A."/>
            <person name="Lam B."/>
            <person name="Langin-Hooper S."/>
            <person name="Lee A."/>
            <person name="Lee J.M."/>
            <person name="Lenz C.A."/>
            <person name="Li J.H."/>
            <person name="Li Y.-P."/>
            <person name="Lin X."/>
            <person name="Liu S.X."/>
            <person name="Liu Z.A."/>
            <person name="Luros J.S."/>
            <person name="Maiti R."/>
            <person name="Marziali A."/>
            <person name="Militscher J."/>
            <person name="Miranda M."/>
            <person name="Nguyen M."/>
            <person name="Nierman W.C."/>
            <person name="Osborne B.I."/>
            <person name="Pai G."/>
            <person name="Peterson J."/>
            <person name="Pham P.K."/>
            <person name="Rizzo M."/>
            <person name="Rooney T."/>
            <person name="Rowley D."/>
            <person name="Sakano H."/>
            <person name="Salzberg S.L."/>
            <person name="Schwartz J.R."/>
            <person name="Shinn P."/>
            <person name="Southwick A.M."/>
            <person name="Sun H."/>
            <person name="Tallon L.J."/>
            <person name="Tambunga G."/>
            <person name="Toriumi M.J."/>
            <person name="Town C.D."/>
            <person name="Utterback T."/>
            <person name="Van Aken S."/>
            <person name="Vaysberg M."/>
            <person name="Vysotskaia V.S."/>
            <person name="Walker M."/>
            <person name="Wu D."/>
            <person name="Yu G."/>
            <person name="Fraser C.M."/>
            <person name="Venter J.C."/>
            <person name="Davis R.W."/>
        </authorList>
    </citation>
    <scope>NUCLEOTIDE SEQUENCE [LARGE SCALE GENOMIC DNA]</scope>
    <source>
        <strain>cv. Columbia</strain>
    </source>
</reference>
<reference key="2">
    <citation type="journal article" date="2017" name="Plant J.">
        <title>Araport11: a complete reannotation of the Arabidopsis thaliana reference genome.</title>
        <authorList>
            <person name="Cheng C.Y."/>
            <person name="Krishnakumar V."/>
            <person name="Chan A.P."/>
            <person name="Thibaud-Nissen F."/>
            <person name="Schobel S."/>
            <person name="Town C.D."/>
        </authorList>
    </citation>
    <scope>GENOME REANNOTATION</scope>
    <source>
        <strain>cv. Columbia</strain>
    </source>
</reference>
<reference key="3">
    <citation type="journal article" date="2004" name="Plant Mol. Biol.">
        <title>Nomenclature for members of the expansin superfamily of genes and proteins.</title>
        <authorList>
            <person name="Kende H."/>
            <person name="Bradford K.J."/>
            <person name="Brummell D.A."/>
            <person name="Cho H.-T."/>
            <person name="Cosgrove D.J."/>
            <person name="Fleming A.J."/>
            <person name="Gehring C."/>
            <person name="Lee Y."/>
            <person name="McQueen-Mason S.J."/>
            <person name="Rose J.K.C."/>
            <person name="Voesenek L.A.C."/>
        </authorList>
    </citation>
    <scope>NOMENCLATURE</scope>
</reference>
<reference key="4">
    <citation type="journal article" date="2005" name="Genome Biol.">
        <title>The expansin superfamily.</title>
        <authorList>
            <person name="Sampedro J."/>
            <person name="Cosgrove D.J."/>
        </authorList>
    </citation>
    <scope>REVIEW</scope>
</reference>
<accession>F4IBJ3</accession>
<sequence length="223" mass="24013">MIGELDFPFLGAGSTGGACGFAVANPPLYGMVSAGGPSVFNNGIGCGTCFQILCNGHPACSRRPITVTITDECPGGPCASEPAHFDLSGKAMGALARPGQGDRLRSAGVLRVYYRRVECLYRRTNIAFRMDPGANPYYISFVVEYENGDGDLAYIEIQPADGEFIPMQEMRSAVWKISSGSPLTGPFNIRLTSAESHKVVLAYNVIPANWKPNETYRSVVNFK</sequence>
<proteinExistence type="inferred from homology"/>
<dbReference type="EMBL" id="AC007234">
    <property type="status" value="NOT_ANNOTATED_CDS"/>
    <property type="molecule type" value="Genomic_DNA"/>
</dbReference>
<dbReference type="EMBL" id="CP002684">
    <property type="protein sequence ID" value="AEE34411.1"/>
    <property type="molecule type" value="Genomic_DNA"/>
</dbReference>
<dbReference type="RefSeq" id="NP_001117554.1">
    <property type="nucleotide sequence ID" value="NM_001124082.1"/>
</dbReference>
<dbReference type="SMR" id="F4IBJ3"/>
<dbReference type="STRING" id="3702.F4IBJ3"/>
<dbReference type="GlyCosmos" id="F4IBJ3">
    <property type="glycosylation" value="1 site, No reported glycans"/>
</dbReference>
<dbReference type="GlyGen" id="F4IBJ3">
    <property type="glycosylation" value="1 site"/>
</dbReference>
<dbReference type="PaxDb" id="3702-AT1G65681.1"/>
<dbReference type="EnsemblPlants" id="AT1G65681.1">
    <property type="protein sequence ID" value="AT1G65681.1"/>
    <property type="gene ID" value="AT1G65681"/>
</dbReference>
<dbReference type="GeneID" id="6240766"/>
<dbReference type="Gramene" id="AT1G65681.1">
    <property type="protein sequence ID" value="AT1G65681.1"/>
    <property type="gene ID" value="AT1G65681"/>
</dbReference>
<dbReference type="KEGG" id="ath:AT1G65681"/>
<dbReference type="Araport" id="AT1G65681"/>
<dbReference type="TAIR" id="AT1G65681">
    <property type="gene designation" value="EXPB6"/>
</dbReference>
<dbReference type="eggNOG" id="ENOG502QRTE">
    <property type="taxonomic scope" value="Eukaryota"/>
</dbReference>
<dbReference type="HOGENOM" id="CLU_027462_1_0_1"/>
<dbReference type="InParanoid" id="F4IBJ3"/>
<dbReference type="OMA" id="KCTEHAS"/>
<dbReference type="PRO" id="PR:F4IBJ3"/>
<dbReference type="Proteomes" id="UP000006548">
    <property type="component" value="Chromosome 1"/>
</dbReference>
<dbReference type="GO" id="GO:0005576">
    <property type="term" value="C:extracellular region"/>
    <property type="evidence" value="ECO:0007669"/>
    <property type="project" value="UniProtKB-KW"/>
</dbReference>
<dbReference type="GO" id="GO:0016020">
    <property type="term" value="C:membrane"/>
    <property type="evidence" value="ECO:0007669"/>
    <property type="project" value="UniProtKB-SubCell"/>
</dbReference>
<dbReference type="GO" id="GO:0009653">
    <property type="term" value="P:anatomical structure morphogenesis"/>
    <property type="evidence" value="ECO:0007669"/>
    <property type="project" value="UniProtKB-ARBA"/>
</dbReference>
<dbReference type="GO" id="GO:0009828">
    <property type="term" value="P:plant-type cell wall loosening"/>
    <property type="evidence" value="ECO:0000250"/>
    <property type="project" value="UniProtKB"/>
</dbReference>
<dbReference type="GO" id="GO:0019953">
    <property type="term" value="P:sexual reproduction"/>
    <property type="evidence" value="ECO:0007669"/>
    <property type="project" value="InterPro"/>
</dbReference>
<dbReference type="CDD" id="cd22275">
    <property type="entry name" value="DPBB_EXPB_N"/>
    <property type="match status" value="1"/>
</dbReference>
<dbReference type="Gene3D" id="2.60.40.760">
    <property type="entry name" value="Expansin, cellulose-binding-like domain"/>
    <property type="match status" value="1"/>
</dbReference>
<dbReference type="Gene3D" id="2.40.40.10">
    <property type="entry name" value="RlpA-like domain"/>
    <property type="match status" value="1"/>
</dbReference>
<dbReference type="InterPro" id="IPR007118">
    <property type="entry name" value="Expan_Lol_pI"/>
</dbReference>
<dbReference type="InterPro" id="IPR007112">
    <property type="entry name" value="Expansin/allergen_DPBB_dom"/>
</dbReference>
<dbReference type="InterPro" id="IPR007117">
    <property type="entry name" value="Expansin_CBD"/>
</dbReference>
<dbReference type="InterPro" id="IPR036749">
    <property type="entry name" value="Expansin_CBD_sf"/>
</dbReference>
<dbReference type="InterPro" id="IPR005795">
    <property type="entry name" value="LolPI"/>
</dbReference>
<dbReference type="InterPro" id="IPR009009">
    <property type="entry name" value="RlpA-like_DPBB"/>
</dbReference>
<dbReference type="InterPro" id="IPR036908">
    <property type="entry name" value="RlpA-like_sf"/>
</dbReference>
<dbReference type="PANTHER" id="PTHR31692">
    <property type="entry name" value="EXPANSIN-B3"/>
    <property type="match status" value="1"/>
</dbReference>
<dbReference type="PANTHER" id="PTHR31692:SF106">
    <property type="entry name" value="EXPANSIN-B4-RELATED"/>
    <property type="match status" value="1"/>
</dbReference>
<dbReference type="Pfam" id="PF03330">
    <property type="entry name" value="DPBB_1"/>
    <property type="match status" value="1"/>
</dbReference>
<dbReference type="Pfam" id="PF01357">
    <property type="entry name" value="Expansin_C"/>
    <property type="match status" value="1"/>
</dbReference>
<dbReference type="PRINTS" id="PR01225">
    <property type="entry name" value="EXPANSNFAMLY"/>
</dbReference>
<dbReference type="PRINTS" id="PR00829">
    <property type="entry name" value="LOLP1ALLERGN"/>
</dbReference>
<dbReference type="SMART" id="SM00837">
    <property type="entry name" value="DPBB_1"/>
    <property type="match status" value="1"/>
</dbReference>
<dbReference type="SUPFAM" id="SSF50685">
    <property type="entry name" value="Barwin-like endoglucanases"/>
    <property type="match status" value="1"/>
</dbReference>
<dbReference type="SUPFAM" id="SSF49590">
    <property type="entry name" value="PHL pollen allergen"/>
    <property type="match status" value="1"/>
</dbReference>
<dbReference type="PROSITE" id="PS50843">
    <property type="entry name" value="EXPANSIN_CBD"/>
    <property type="match status" value="1"/>
</dbReference>
<dbReference type="PROSITE" id="PS50842">
    <property type="entry name" value="EXPANSIN_EG45"/>
    <property type="match status" value="1"/>
</dbReference>
<organism>
    <name type="scientific">Arabidopsis thaliana</name>
    <name type="common">Mouse-ear cress</name>
    <dbReference type="NCBI Taxonomy" id="3702"/>
    <lineage>
        <taxon>Eukaryota</taxon>
        <taxon>Viridiplantae</taxon>
        <taxon>Streptophyta</taxon>
        <taxon>Embryophyta</taxon>
        <taxon>Tracheophyta</taxon>
        <taxon>Spermatophyta</taxon>
        <taxon>Magnoliopsida</taxon>
        <taxon>eudicotyledons</taxon>
        <taxon>Gunneridae</taxon>
        <taxon>Pentapetalae</taxon>
        <taxon>rosids</taxon>
        <taxon>malvids</taxon>
        <taxon>Brassicales</taxon>
        <taxon>Brassicaceae</taxon>
        <taxon>Camelineae</taxon>
        <taxon>Arabidopsis</taxon>
    </lineage>
</organism>
<name>EXB6L_ARATH</name>
<protein>
    <recommendedName>
        <fullName evidence="6">Expansin-B6</fullName>
        <shortName evidence="6">At-EXPB6</shortName>
        <shortName evidence="6">AtEXPB6</shortName>
    </recommendedName>
    <alternativeName>
        <fullName evidence="6">Beta-expansin-6</fullName>
    </alternativeName>
</protein>
<comment type="function">
    <text evidence="8">May cause loosening and extension of plant cell walls by disrupting non-covalent bonding between cellulose microfibrils and matrix glucans.</text>
</comment>
<comment type="subcellular location">
    <subcellularLocation>
        <location evidence="1">Secreted</location>
        <location evidence="1">Cell wall</location>
    </subcellularLocation>
    <subcellularLocation>
        <location evidence="1">Membrane</location>
        <topology evidence="1">Peripheral membrane protein</topology>
    </subcellularLocation>
</comment>
<comment type="similarity">
    <text evidence="7">Belongs to the expansin family. Expansin B subfamily.</text>
</comment>
<comment type="caution">
    <text evidence="7">Truncated sequence in cv. Columbia (AC F4IBJ3) N-terminus compared to cv. Landsberg erecta (AC Q6IVU7) and other members of the expansin B subfamily.</text>
</comment>